<evidence type="ECO:0000255" key="1">
    <source>
        <dbReference type="HAMAP-Rule" id="MF_00169"/>
    </source>
</evidence>
<sequence>MLGKILLLNGPNLNMLGKREPDIYGHDTLEDVVALATAEAAKHGLEVEALQSNHEGELIDALHNARGTHIGCVINPGGLTHTSVALLDAVKASELPTVEVHISNPHAREEFRHHSYISLAAVSVIAGAGIQGYRFAVDILANLKK</sequence>
<accession>A4QB64</accession>
<protein>
    <recommendedName>
        <fullName evidence="1">3-dehydroquinate dehydratase</fullName>
        <shortName evidence="1">3-dehydroquinase</shortName>
        <ecNumber evidence="1">4.2.1.10</ecNumber>
    </recommendedName>
    <alternativeName>
        <fullName evidence="1">Type II DHQase</fullName>
    </alternativeName>
</protein>
<gene>
    <name evidence="1" type="primary">aroQ</name>
    <name type="ordered locus">cgR_0494</name>
</gene>
<dbReference type="EC" id="4.2.1.10" evidence="1"/>
<dbReference type="EMBL" id="AP009044">
    <property type="protein sequence ID" value="BAF53461.1"/>
    <property type="molecule type" value="Genomic_DNA"/>
</dbReference>
<dbReference type="RefSeq" id="WP_011896691.1">
    <property type="nucleotide sequence ID" value="NC_009342.1"/>
</dbReference>
<dbReference type="SMR" id="A4QB64"/>
<dbReference type="KEGG" id="cgt:cgR_0494"/>
<dbReference type="HOGENOM" id="CLU_090968_2_0_11"/>
<dbReference type="PhylomeDB" id="A4QB64"/>
<dbReference type="BioCyc" id="MetaCyc:MONOMER-15335"/>
<dbReference type="UniPathway" id="UPA00053">
    <property type="reaction ID" value="UER00086"/>
</dbReference>
<dbReference type="Proteomes" id="UP000006698">
    <property type="component" value="Chromosome"/>
</dbReference>
<dbReference type="GO" id="GO:0003855">
    <property type="term" value="F:3-dehydroquinate dehydratase activity"/>
    <property type="evidence" value="ECO:0007669"/>
    <property type="project" value="UniProtKB-UniRule"/>
</dbReference>
<dbReference type="GO" id="GO:0008652">
    <property type="term" value="P:amino acid biosynthetic process"/>
    <property type="evidence" value="ECO:0007669"/>
    <property type="project" value="UniProtKB-KW"/>
</dbReference>
<dbReference type="GO" id="GO:0009073">
    <property type="term" value="P:aromatic amino acid family biosynthetic process"/>
    <property type="evidence" value="ECO:0007669"/>
    <property type="project" value="UniProtKB-KW"/>
</dbReference>
<dbReference type="GO" id="GO:0009423">
    <property type="term" value="P:chorismate biosynthetic process"/>
    <property type="evidence" value="ECO:0007669"/>
    <property type="project" value="UniProtKB-UniRule"/>
</dbReference>
<dbReference type="GO" id="GO:0019631">
    <property type="term" value="P:quinate catabolic process"/>
    <property type="evidence" value="ECO:0007669"/>
    <property type="project" value="TreeGrafter"/>
</dbReference>
<dbReference type="CDD" id="cd00466">
    <property type="entry name" value="DHQase_II"/>
    <property type="match status" value="1"/>
</dbReference>
<dbReference type="Gene3D" id="3.40.50.9100">
    <property type="entry name" value="Dehydroquinase, class II"/>
    <property type="match status" value="1"/>
</dbReference>
<dbReference type="HAMAP" id="MF_00169">
    <property type="entry name" value="AroQ"/>
    <property type="match status" value="1"/>
</dbReference>
<dbReference type="InterPro" id="IPR001874">
    <property type="entry name" value="DHquinase_II"/>
</dbReference>
<dbReference type="InterPro" id="IPR018509">
    <property type="entry name" value="DHquinase_II_CS"/>
</dbReference>
<dbReference type="InterPro" id="IPR036441">
    <property type="entry name" value="DHquinase_II_sf"/>
</dbReference>
<dbReference type="NCBIfam" id="TIGR01088">
    <property type="entry name" value="aroQ"/>
    <property type="match status" value="1"/>
</dbReference>
<dbReference type="NCBIfam" id="NF003805">
    <property type="entry name" value="PRK05395.1-2"/>
    <property type="match status" value="1"/>
</dbReference>
<dbReference type="NCBIfam" id="NF003806">
    <property type="entry name" value="PRK05395.1-3"/>
    <property type="match status" value="1"/>
</dbReference>
<dbReference type="NCBIfam" id="NF003807">
    <property type="entry name" value="PRK05395.1-4"/>
    <property type="match status" value="1"/>
</dbReference>
<dbReference type="PANTHER" id="PTHR21272">
    <property type="entry name" value="CATABOLIC 3-DEHYDROQUINASE"/>
    <property type="match status" value="1"/>
</dbReference>
<dbReference type="PANTHER" id="PTHR21272:SF3">
    <property type="entry name" value="CATABOLIC 3-DEHYDROQUINASE"/>
    <property type="match status" value="1"/>
</dbReference>
<dbReference type="Pfam" id="PF01220">
    <property type="entry name" value="DHquinase_II"/>
    <property type="match status" value="1"/>
</dbReference>
<dbReference type="PIRSF" id="PIRSF001399">
    <property type="entry name" value="DHquinase_II"/>
    <property type="match status" value="1"/>
</dbReference>
<dbReference type="SUPFAM" id="SSF52304">
    <property type="entry name" value="Type II 3-dehydroquinate dehydratase"/>
    <property type="match status" value="1"/>
</dbReference>
<dbReference type="PROSITE" id="PS01029">
    <property type="entry name" value="DEHYDROQUINASE_II"/>
    <property type="match status" value="1"/>
</dbReference>
<proteinExistence type="inferred from homology"/>
<reference key="1">
    <citation type="journal article" date="2007" name="Microbiology">
        <title>Comparative analysis of the Corynebacterium glutamicum group and complete genome sequence of strain R.</title>
        <authorList>
            <person name="Yukawa H."/>
            <person name="Omumasaba C.A."/>
            <person name="Nonaka H."/>
            <person name="Kos P."/>
            <person name="Okai N."/>
            <person name="Suzuki N."/>
            <person name="Suda M."/>
            <person name="Tsuge Y."/>
            <person name="Watanabe J."/>
            <person name="Ikeda Y."/>
            <person name="Vertes A.A."/>
            <person name="Inui M."/>
        </authorList>
    </citation>
    <scope>NUCLEOTIDE SEQUENCE [LARGE SCALE GENOMIC DNA]</scope>
    <source>
        <strain>R</strain>
    </source>
</reference>
<feature type="chain" id="PRO_1000023465" description="3-dehydroquinate dehydratase">
    <location>
        <begin position="1"/>
        <end position="145"/>
    </location>
</feature>
<feature type="active site" description="Proton acceptor" evidence="1">
    <location>
        <position position="24"/>
    </location>
</feature>
<feature type="active site" description="Proton donor" evidence="1">
    <location>
        <position position="101"/>
    </location>
</feature>
<feature type="binding site" evidence="1">
    <location>
        <position position="75"/>
    </location>
    <ligand>
        <name>substrate</name>
    </ligand>
</feature>
<feature type="binding site" evidence="1">
    <location>
        <position position="81"/>
    </location>
    <ligand>
        <name>substrate</name>
    </ligand>
</feature>
<feature type="binding site" evidence="1">
    <location>
        <position position="88"/>
    </location>
    <ligand>
        <name>substrate</name>
    </ligand>
</feature>
<feature type="binding site" evidence="1">
    <location>
        <begin position="102"/>
        <end position="103"/>
    </location>
    <ligand>
        <name>substrate</name>
    </ligand>
</feature>
<feature type="binding site" evidence="1">
    <location>
        <position position="112"/>
    </location>
    <ligand>
        <name>substrate</name>
    </ligand>
</feature>
<feature type="site" description="Transition state stabilizer" evidence="1">
    <location>
        <position position="19"/>
    </location>
</feature>
<comment type="function">
    <text evidence="1">Catalyzes a trans-dehydration via an enolate intermediate.</text>
</comment>
<comment type="catalytic activity">
    <reaction evidence="1">
        <text>3-dehydroquinate = 3-dehydroshikimate + H2O</text>
        <dbReference type="Rhea" id="RHEA:21096"/>
        <dbReference type="ChEBI" id="CHEBI:15377"/>
        <dbReference type="ChEBI" id="CHEBI:16630"/>
        <dbReference type="ChEBI" id="CHEBI:32364"/>
        <dbReference type="EC" id="4.2.1.10"/>
    </reaction>
</comment>
<comment type="pathway">
    <text evidence="1">Metabolic intermediate biosynthesis; chorismate biosynthesis; chorismate from D-erythrose 4-phosphate and phosphoenolpyruvate: step 3/7.</text>
</comment>
<comment type="subunit">
    <text evidence="1">Homododecamer.</text>
</comment>
<comment type="similarity">
    <text evidence="1">Belongs to the type-II 3-dehydroquinase family.</text>
</comment>
<organism>
    <name type="scientific">Corynebacterium glutamicum (strain R)</name>
    <dbReference type="NCBI Taxonomy" id="340322"/>
    <lineage>
        <taxon>Bacteria</taxon>
        <taxon>Bacillati</taxon>
        <taxon>Actinomycetota</taxon>
        <taxon>Actinomycetes</taxon>
        <taxon>Mycobacteriales</taxon>
        <taxon>Corynebacteriaceae</taxon>
        <taxon>Corynebacterium</taxon>
    </lineage>
</organism>
<name>AROQ_CORGB</name>
<keyword id="KW-0028">Amino-acid biosynthesis</keyword>
<keyword id="KW-0057">Aromatic amino acid biosynthesis</keyword>
<keyword id="KW-0456">Lyase</keyword>